<gene>
    <name evidence="1" type="primary">dut</name>
    <name type="synonym">dutA</name>
</gene>
<comment type="function">
    <text evidence="1">This enzyme is involved in nucleotide metabolism: it produces dUMP, the immediate precursor of thymidine nucleotides and it decreases the intracellular concentration of dUTP so that uracil cannot be incorporated into DNA.</text>
</comment>
<comment type="catalytic activity">
    <reaction evidence="1">
        <text>dUTP + H2O = dUMP + diphosphate + H(+)</text>
        <dbReference type="Rhea" id="RHEA:10248"/>
        <dbReference type="ChEBI" id="CHEBI:15377"/>
        <dbReference type="ChEBI" id="CHEBI:15378"/>
        <dbReference type="ChEBI" id="CHEBI:33019"/>
        <dbReference type="ChEBI" id="CHEBI:61555"/>
        <dbReference type="ChEBI" id="CHEBI:246422"/>
        <dbReference type="EC" id="3.6.1.23"/>
    </reaction>
</comment>
<comment type="cofactor">
    <cofactor evidence="1">
        <name>Mg(2+)</name>
        <dbReference type="ChEBI" id="CHEBI:18420"/>
    </cofactor>
</comment>
<comment type="pathway">
    <text evidence="1">Pyrimidine metabolism; dUMP biosynthesis; dUMP from dCTP (dUTP route): step 2/2.</text>
</comment>
<comment type="similarity">
    <text evidence="1">Belongs to the dUTPase family.</text>
</comment>
<organism>
    <name type="scientific">Clostridioides difficile</name>
    <name type="common">Peptoclostridium difficile</name>
    <dbReference type="NCBI Taxonomy" id="1496"/>
    <lineage>
        <taxon>Bacteria</taxon>
        <taxon>Bacillati</taxon>
        <taxon>Bacillota</taxon>
        <taxon>Clostridia</taxon>
        <taxon>Peptostreptococcales</taxon>
        <taxon>Peptostreptococcaceae</taxon>
        <taxon>Clostridioides</taxon>
    </lineage>
</organism>
<keyword id="KW-0378">Hydrolase</keyword>
<keyword id="KW-0460">Magnesium</keyword>
<keyword id="KW-0479">Metal-binding</keyword>
<keyword id="KW-0546">Nucleotide metabolism</keyword>
<sequence>MYNLKVKKLNDDAIIPNFAHKGDAGMDLYSIEEVVIPPGETKLIKTGICIELPTMTEAQVRPRSGLALKHSVTVLNTPGTIDEGYRGELKIILINHGKNDFKVEKHMKIAQMIVKPIYDINIEEVKELSDSERGKGGFGSTGF</sequence>
<proteinExistence type="inferred from homology"/>
<name>DUT_CLODI</name>
<evidence type="ECO:0000255" key="1">
    <source>
        <dbReference type="HAMAP-Rule" id="MF_00116"/>
    </source>
</evidence>
<protein>
    <recommendedName>
        <fullName evidence="1">Deoxyuridine 5'-triphosphate nucleotidohydrolase</fullName>
        <shortName evidence="1">dUTPase</shortName>
        <ecNumber evidence="1">3.6.1.23</ecNumber>
    </recommendedName>
    <alternativeName>
        <fullName evidence="1">dUTP pyrophosphatase</fullName>
    </alternativeName>
</protein>
<accession>O30931</accession>
<feature type="chain" id="PRO_0000182851" description="Deoxyuridine 5'-triphosphate nucleotidohydrolase">
    <location>
        <begin position="1"/>
        <end position="143"/>
    </location>
</feature>
<feature type="binding site" evidence="1">
    <location>
        <begin position="63"/>
        <end position="65"/>
    </location>
    <ligand>
        <name>substrate</name>
    </ligand>
</feature>
<feature type="binding site" evidence="1">
    <location>
        <position position="76"/>
    </location>
    <ligand>
        <name>substrate</name>
    </ligand>
</feature>
<feature type="binding site" evidence="1">
    <location>
        <begin position="80"/>
        <end position="82"/>
    </location>
    <ligand>
        <name>substrate</name>
    </ligand>
</feature>
<feature type="binding site" evidence="1">
    <location>
        <position position="90"/>
    </location>
    <ligand>
        <name>substrate</name>
    </ligand>
</feature>
<reference key="1">
    <citation type="submission" date="1997-09" db="EMBL/GenBank/DDBJ databases">
        <title>Nucleotide sequence and expression of a gene encoding the Clostridium difficile dUTP pyrophosphatase (dUTPase).</title>
        <authorList>
            <person name="Ivey D.M."/>
            <person name="Winters D.K."/>
        </authorList>
    </citation>
    <scope>NUCLEOTIDE SEQUENCE [GENOMIC DNA]</scope>
</reference>
<dbReference type="EC" id="3.6.1.23" evidence="1"/>
<dbReference type="EMBL" id="AF022240">
    <property type="protein sequence ID" value="AAB84097.1"/>
    <property type="molecule type" value="Genomic_DNA"/>
</dbReference>
<dbReference type="RefSeq" id="WP_004454700.1">
    <property type="nucleotide sequence ID" value="NZ_WUUI01000001.1"/>
</dbReference>
<dbReference type="SMR" id="O30931"/>
<dbReference type="GeneID" id="66354798"/>
<dbReference type="OMA" id="RSGMGHK"/>
<dbReference type="UniPathway" id="UPA00610">
    <property type="reaction ID" value="UER00666"/>
</dbReference>
<dbReference type="GO" id="GO:0004170">
    <property type="term" value="F:dUTP diphosphatase activity"/>
    <property type="evidence" value="ECO:0007669"/>
    <property type="project" value="UniProtKB-UniRule"/>
</dbReference>
<dbReference type="GO" id="GO:0000287">
    <property type="term" value="F:magnesium ion binding"/>
    <property type="evidence" value="ECO:0007669"/>
    <property type="project" value="UniProtKB-UniRule"/>
</dbReference>
<dbReference type="GO" id="GO:0006226">
    <property type="term" value="P:dUMP biosynthetic process"/>
    <property type="evidence" value="ECO:0007669"/>
    <property type="project" value="UniProtKB-UniRule"/>
</dbReference>
<dbReference type="GO" id="GO:0046081">
    <property type="term" value="P:dUTP catabolic process"/>
    <property type="evidence" value="ECO:0007669"/>
    <property type="project" value="InterPro"/>
</dbReference>
<dbReference type="CDD" id="cd07557">
    <property type="entry name" value="trimeric_dUTPase"/>
    <property type="match status" value="1"/>
</dbReference>
<dbReference type="Gene3D" id="2.70.40.10">
    <property type="match status" value="1"/>
</dbReference>
<dbReference type="HAMAP" id="MF_00116">
    <property type="entry name" value="dUTPase_bact"/>
    <property type="match status" value="1"/>
</dbReference>
<dbReference type="InterPro" id="IPR008181">
    <property type="entry name" value="dUTPase"/>
</dbReference>
<dbReference type="InterPro" id="IPR029054">
    <property type="entry name" value="dUTPase-like"/>
</dbReference>
<dbReference type="InterPro" id="IPR036157">
    <property type="entry name" value="dUTPase-like_sf"/>
</dbReference>
<dbReference type="InterPro" id="IPR033704">
    <property type="entry name" value="dUTPase_trimeric"/>
</dbReference>
<dbReference type="NCBIfam" id="TIGR00576">
    <property type="entry name" value="dut"/>
    <property type="match status" value="1"/>
</dbReference>
<dbReference type="NCBIfam" id="NF001862">
    <property type="entry name" value="PRK00601.1"/>
    <property type="match status" value="1"/>
</dbReference>
<dbReference type="PANTHER" id="PTHR11241">
    <property type="entry name" value="DEOXYURIDINE 5'-TRIPHOSPHATE NUCLEOTIDOHYDROLASE"/>
    <property type="match status" value="1"/>
</dbReference>
<dbReference type="PANTHER" id="PTHR11241:SF0">
    <property type="entry name" value="DEOXYURIDINE 5'-TRIPHOSPHATE NUCLEOTIDOHYDROLASE"/>
    <property type="match status" value="1"/>
</dbReference>
<dbReference type="Pfam" id="PF00692">
    <property type="entry name" value="dUTPase"/>
    <property type="match status" value="1"/>
</dbReference>
<dbReference type="SUPFAM" id="SSF51283">
    <property type="entry name" value="dUTPase-like"/>
    <property type="match status" value="1"/>
</dbReference>